<accession>P51503</accession>
<comment type="function">
    <text>May be involved in transcriptional regulation.</text>
</comment>
<comment type="subcellular location">
    <subcellularLocation>
        <location evidence="2">Nucleus</location>
    </subcellularLocation>
</comment>
<comment type="similarity">
    <text evidence="2">Belongs to the krueppel C2H2-type zinc-finger protein family.</text>
</comment>
<gene>
    <name type="primary">ZNF80</name>
</gene>
<sequence>MSPKGDGLGTVDGLHSQVLQEQVSTGDNLHECDSQGPSKDTLVREGKTYKCKECGKVFNKNSLLVRHHQIHAGVKTYECQECGKAFHEKVDFVRHMRIHSGEKPCKCVECGKVFNRRSHLLCYRQIHTGEKPYECSECGKTFSYHSVFIQHRMTHTGEKLFGCKECGKTFYYNSSLTRHMKIHTGEKPYKCGECGKTFTYHSVFFRHSMTHTAGKPYECKECGKGFYYSYSLTRHTRSHTGEKPYECLEHRKAFGYHSAFAQQSKIHSGGKNL</sequence>
<organism>
    <name type="scientific">Gorilla gorilla gorilla</name>
    <name type="common">Western lowland gorilla</name>
    <dbReference type="NCBI Taxonomy" id="9595"/>
    <lineage>
        <taxon>Eukaryota</taxon>
        <taxon>Metazoa</taxon>
        <taxon>Chordata</taxon>
        <taxon>Craniata</taxon>
        <taxon>Vertebrata</taxon>
        <taxon>Euteleostomi</taxon>
        <taxon>Mammalia</taxon>
        <taxon>Eutheria</taxon>
        <taxon>Euarchontoglires</taxon>
        <taxon>Primates</taxon>
        <taxon>Haplorrhini</taxon>
        <taxon>Catarrhini</taxon>
        <taxon>Hominidae</taxon>
        <taxon>Gorilla</taxon>
    </lineage>
</organism>
<name>ZNF80_GORGO</name>
<feature type="chain" id="PRO_0000047390" description="Zinc finger protein 80">
    <location>
        <begin position="1"/>
        <end position="273"/>
    </location>
</feature>
<feature type="zinc finger region" description="C2H2-type 1" evidence="1">
    <location>
        <begin position="49"/>
        <end position="71"/>
    </location>
</feature>
<feature type="zinc finger region" description="C2H2-type 2" evidence="1">
    <location>
        <begin position="77"/>
        <end position="99"/>
    </location>
</feature>
<feature type="zinc finger region" description="C2H2-type 3; atypical" evidence="1">
    <location>
        <begin position="105"/>
        <end position="127"/>
    </location>
</feature>
<feature type="zinc finger region" description="C2H2-type 4" evidence="1">
    <location>
        <begin position="133"/>
        <end position="155"/>
    </location>
</feature>
<feature type="zinc finger region" description="C2H2-type 5" evidence="1">
    <location>
        <begin position="161"/>
        <end position="183"/>
    </location>
</feature>
<feature type="zinc finger region" description="C2H2-type 6" evidence="1">
    <location>
        <begin position="189"/>
        <end position="211"/>
    </location>
</feature>
<feature type="zinc finger region" description="C2H2-type 7" evidence="1">
    <location>
        <begin position="217"/>
        <end position="239"/>
    </location>
</feature>
<dbReference type="EMBL" id="X89631">
    <property type="protein sequence ID" value="CAA61773.1"/>
    <property type="molecule type" value="Genomic_DNA"/>
</dbReference>
<dbReference type="SMR" id="P51503"/>
<dbReference type="STRING" id="9593.ENSGGOP00000047277"/>
<dbReference type="eggNOG" id="KOG1721">
    <property type="taxonomic scope" value="Eukaryota"/>
</dbReference>
<dbReference type="InParanoid" id="P51503"/>
<dbReference type="Proteomes" id="UP000001519">
    <property type="component" value="Unplaced"/>
</dbReference>
<dbReference type="GO" id="GO:0005634">
    <property type="term" value="C:nucleus"/>
    <property type="evidence" value="ECO:0007669"/>
    <property type="project" value="UniProtKB-SubCell"/>
</dbReference>
<dbReference type="GO" id="GO:0000981">
    <property type="term" value="F:DNA-binding transcription factor activity, RNA polymerase II-specific"/>
    <property type="evidence" value="ECO:0000318"/>
    <property type="project" value="GO_Central"/>
</dbReference>
<dbReference type="GO" id="GO:0000978">
    <property type="term" value="F:RNA polymerase II cis-regulatory region sequence-specific DNA binding"/>
    <property type="evidence" value="ECO:0000318"/>
    <property type="project" value="GO_Central"/>
</dbReference>
<dbReference type="GO" id="GO:0008270">
    <property type="term" value="F:zinc ion binding"/>
    <property type="evidence" value="ECO:0007669"/>
    <property type="project" value="UniProtKB-KW"/>
</dbReference>
<dbReference type="GO" id="GO:0006357">
    <property type="term" value="P:regulation of transcription by RNA polymerase II"/>
    <property type="evidence" value="ECO:0000318"/>
    <property type="project" value="GO_Central"/>
</dbReference>
<dbReference type="FunFam" id="3.30.160.60:FF:000608">
    <property type="entry name" value="zinc finger protein 286A isoform X1"/>
    <property type="match status" value="1"/>
</dbReference>
<dbReference type="FunFam" id="3.30.160.60:FF:002017">
    <property type="entry name" value="Zinc finger protein 599"/>
    <property type="match status" value="1"/>
</dbReference>
<dbReference type="FunFam" id="3.30.160.60:FF:002341">
    <property type="entry name" value="Zinc finger protein 80"/>
    <property type="match status" value="1"/>
</dbReference>
<dbReference type="FunFam" id="3.30.160.60:FF:002593">
    <property type="entry name" value="Zinc finger protein 80"/>
    <property type="match status" value="2"/>
</dbReference>
<dbReference type="FunFam" id="3.30.160.60:FF:000275">
    <property type="entry name" value="zinc finger protein 90 homolog"/>
    <property type="match status" value="1"/>
</dbReference>
<dbReference type="FunFam" id="3.30.160.60:FF:001111">
    <property type="entry name" value="Zinc finger protein 92 homolog"/>
    <property type="match status" value="1"/>
</dbReference>
<dbReference type="Gene3D" id="3.30.160.60">
    <property type="entry name" value="Classic Zinc Finger"/>
    <property type="match status" value="8"/>
</dbReference>
<dbReference type="InterPro" id="IPR050758">
    <property type="entry name" value="Znf_C2H2-type"/>
</dbReference>
<dbReference type="InterPro" id="IPR036236">
    <property type="entry name" value="Znf_C2H2_sf"/>
</dbReference>
<dbReference type="InterPro" id="IPR013087">
    <property type="entry name" value="Znf_C2H2_type"/>
</dbReference>
<dbReference type="PANTHER" id="PTHR23234:SF10">
    <property type="entry name" value="RIKEN CDNA 6720489N17 GENE-RELATED"/>
    <property type="match status" value="1"/>
</dbReference>
<dbReference type="PANTHER" id="PTHR23234">
    <property type="entry name" value="ZNF44 PROTEIN"/>
    <property type="match status" value="1"/>
</dbReference>
<dbReference type="Pfam" id="PF00096">
    <property type="entry name" value="zf-C2H2"/>
    <property type="match status" value="4"/>
</dbReference>
<dbReference type="Pfam" id="PF13465">
    <property type="entry name" value="zf-H2C2_2"/>
    <property type="match status" value="1"/>
</dbReference>
<dbReference type="SMART" id="SM00355">
    <property type="entry name" value="ZnF_C2H2"/>
    <property type="match status" value="7"/>
</dbReference>
<dbReference type="SUPFAM" id="SSF57667">
    <property type="entry name" value="beta-beta-alpha zinc fingers"/>
    <property type="match status" value="4"/>
</dbReference>
<dbReference type="PROSITE" id="PS00028">
    <property type="entry name" value="ZINC_FINGER_C2H2_1"/>
    <property type="match status" value="6"/>
</dbReference>
<dbReference type="PROSITE" id="PS50157">
    <property type="entry name" value="ZINC_FINGER_C2H2_2"/>
    <property type="match status" value="7"/>
</dbReference>
<proteinExistence type="inferred from homology"/>
<keyword id="KW-0238">DNA-binding</keyword>
<keyword id="KW-0479">Metal-binding</keyword>
<keyword id="KW-0539">Nucleus</keyword>
<keyword id="KW-1185">Reference proteome</keyword>
<keyword id="KW-0677">Repeat</keyword>
<keyword id="KW-0804">Transcription</keyword>
<keyword id="KW-0805">Transcription regulation</keyword>
<keyword id="KW-0862">Zinc</keyword>
<keyword id="KW-0863">Zinc-finger</keyword>
<protein>
    <recommendedName>
        <fullName>Zinc finger protein 80</fullName>
    </recommendedName>
</protein>
<evidence type="ECO:0000255" key="1">
    <source>
        <dbReference type="PROSITE-ProRule" id="PRU00042"/>
    </source>
</evidence>
<evidence type="ECO:0000305" key="2"/>
<reference key="1">
    <citation type="journal article" date="1995" name="Virology">
        <title>Mobilization of an ERV9 human endogenous retroviral element during primate evolution.</title>
        <authorList>
            <person name="di Cristofano A."/>
            <person name="Strazzullo M."/>
            <person name="Parisi T."/>
            <person name="la Mantia G."/>
        </authorList>
    </citation>
    <scope>NUCLEOTIDE SEQUENCE [GENOMIC DNA]</scope>
</reference>